<protein>
    <recommendedName>
        <fullName evidence="1">Hydroxyacylglutathione hydrolase</fullName>
        <ecNumber evidence="1">3.1.2.6</ecNumber>
    </recommendedName>
    <alternativeName>
        <fullName evidence="1">Glyoxalase II</fullName>
        <shortName evidence="1">Glx II</shortName>
    </alternativeName>
</protein>
<keyword id="KW-0378">Hydrolase</keyword>
<keyword id="KW-0479">Metal-binding</keyword>
<keyword id="KW-0862">Zinc</keyword>
<dbReference type="EC" id="3.1.2.6" evidence="1"/>
<dbReference type="EMBL" id="CU928160">
    <property type="protein sequence ID" value="CAQ97095.1"/>
    <property type="molecule type" value="Genomic_DNA"/>
</dbReference>
<dbReference type="RefSeq" id="WP_001052751.1">
    <property type="nucleotide sequence ID" value="NC_011741.1"/>
</dbReference>
<dbReference type="SMR" id="B7M211"/>
<dbReference type="KEGG" id="ecr:ECIAI1_0220"/>
<dbReference type="HOGENOM" id="CLU_030571_4_1_6"/>
<dbReference type="UniPathway" id="UPA00619">
    <property type="reaction ID" value="UER00676"/>
</dbReference>
<dbReference type="GO" id="GO:0004416">
    <property type="term" value="F:hydroxyacylglutathione hydrolase activity"/>
    <property type="evidence" value="ECO:0007669"/>
    <property type="project" value="UniProtKB-UniRule"/>
</dbReference>
<dbReference type="GO" id="GO:0046872">
    <property type="term" value="F:metal ion binding"/>
    <property type="evidence" value="ECO:0007669"/>
    <property type="project" value="UniProtKB-KW"/>
</dbReference>
<dbReference type="GO" id="GO:0019243">
    <property type="term" value="P:methylglyoxal catabolic process to D-lactate via S-lactoyl-glutathione"/>
    <property type="evidence" value="ECO:0007669"/>
    <property type="project" value="InterPro"/>
</dbReference>
<dbReference type="CDD" id="cd07723">
    <property type="entry name" value="hydroxyacylglutathione_hydrolase_MBL-fold"/>
    <property type="match status" value="1"/>
</dbReference>
<dbReference type="FunFam" id="3.60.15.10:FF:000012">
    <property type="entry name" value="Hydroxyacylglutathione hydrolase"/>
    <property type="match status" value="1"/>
</dbReference>
<dbReference type="Gene3D" id="3.60.15.10">
    <property type="entry name" value="Ribonuclease Z/Hydroxyacylglutathione hydrolase-like"/>
    <property type="match status" value="1"/>
</dbReference>
<dbReference type="HAMAP" id="MF_01374">
    <property type="entry name" value="Glyoxalase_2"/>
    <property type="match status" value="1"/>
</dbReference>
<dbReference type="InterPro" id="IPR035680">
    <property type="entry name" value="Clx_II_MBL"/>
</dbReference>
<dbReference type="InterPro" id="IPR050110">
    <property type="entry name" value="Glyoxalase_II_hydrolase"/>
</dbReference>
<dbReference type="InterPro" id="IPR032282">
    <property type="entry name" value="HAGH_C"/>
</dbReference>
<dbReference type="InterPro" id="IPR017782">
    <property type="entry name" value="Hydroxyacylglutathione_Hdrlase"/>
</dbReference>
<dbReference type="InterPro" id="IPR001279">
    <property type="entry name" value="Metallo-B-lactamas"/>
</dbReference>
<dbReference type="InterPro" id="IPR036866">
    <property type="entry name" value="RibonucZ/Hydroxyglut_hydro"/>
</dbReference>
<dbReference type="NCBIfam" id="TIGR03413">
    <property type="entry name" value="GSH_gloB"/>
    <property type="match status" value="1"/>
</dbReference>
<dbReference type="NCBIfam" id="NF007597">
    <property type="entry name" value="PRK10241.1"/>
    <property type="match status" value="1"/>
</dbReference>
<dbReference type="PANTHER" id="PTHR43705">
    <property type="entry name" value="HYDROXYACYLGLUTATHIONE HYDROLASE"/>
    <property type="match status" value="1"/>
</dbReference>
<dbReference type="PANTHER" id="PTHR43705:SF1">
    <property type="entry name" value="HYDROXYACYLGLUTATHIONE HYDROLASE GLOB"/>
    <property type="match status" value="1"/>
</dbReference>
<dbReference type="Pfam" id="PF16123">
    <property type="entry name" value="HAGH_C"/>
    <property type="match status" value="1"/>
</dbReference>
<dbReference type="Pfam" id="PF00753">
    <property type="entry name" value="Lactamase_B"/>
    <property type="match status" value="1"/>
</dbReference>
<dbReference type="PIRSF" id="PIRSF005457">
    <property type="entry name" value="Glx"/>
    <property type="match status" value="1"/>
</dbReference>
<dbReference type="SMART" id="SM00849">
    <property type="entry name" value="Lactamase_B"/>
    <property type="match status" value="1"/>
</dbReference>
<dbReference type="SUPFAM" id="SSF56281">
    <property type="entry name" value="Metallo-hydrolase/oxidoreductase"/>
    <property type="match status" value="1"/>
</dbReference>
<comment type="function">
    <text evidence="1">Thiolesterase that catalyzes the hydrolysis of S-D-lactoyl-glutathione to form glutathione and D-lactic acid.</text>
</comment>
<comment type="catalytic activity">
    <reaction evidence="1">
        <text>an S-(2-hydroxyacyl)glutathione + H2O = a 2-hydroxy carboxylate + glutathione + H(+)</text>
        <dbReference type="Rhea" id="RHEA:21864"/>
        <dbReference type="ChEBI" id="CHEBI:15377"/>
        <dbReference type="ChEBI" id="CHEBI:15378"/>
        <dbReference type="ChEBI" id="CHEBI:57925"/>
        <dbReference type="ChEBI" id="CHEBI:58896"/>
        <dbReference type="ChEBI" id="CHEBI:71261"/>
        <dbReference type="EC" id="3.1.2.6"/>
    </reaction>
</comment>
<comment type="cofactor">
    <cofactor evidence="1">
        <name>Zn(2+)</name>
        <dbReference type="ChEBI" id="CHEBI:29105"/>
    </cofactor>
    <text evidence="1">Binds 2 Zn(2+) ions per subunit.</text>
</comment>
<comment type="pathway">
    <text evidence="1">Secondary metabolite metabolism; methylglyoxal degradation; (R)-lactate from methylglyoxal: step 2/2.</text>
</comment>
<comment type="subunit">
    <text evidence="1">Monomer.</text>
</comment>
<comment type="similarity">
    <text evidence="1">Belongs to the metallo-beta-lactamase superfamily. Glyoxalase II family.</text>
</comment>
<feature type="chain" id="PRO_1000144761" description="Hydroxyacylglutathione hydrolase">
    <location>
        <begin position="1"/>
        <end position="251"/>
    </location>
</feature>
<feature type="binding site" evidence="1">
    <location>
        <position position="53"/>
    </location>
    <ligand>
        <name>Zn(2+)</name>
        <dbReference type="ChEBI" id="CHEBI:29105"/>
        <label>1</label>
    </ligand>
</feature>
<feature type="binding site" evidence="1">
    <location>
        <position position="55"/>
    </location>
    <ligand>
        <name>Zn(2+)</name>
        <dbReference type="ChEBI" id="CHEBI:29105"/>
        <label>1</label>
    </ligand>
</feature>
<feature type="binding site" evidence="1">
    <location>
        <position position="57"/>
    </location>
    <ligand>
        <name>Zn(2+)</name>
        <dbReference type="ChEBI" id="CHEBI:29105"/>
        <label>2</label>
    </ligand>
</feature>
<feature type="binding site" evidence="1">
    <location>
        <position position="58"/>
    </location>
    <ligand>
        <name>Zn(2+)</name>
        <dbReference type="ChEBI" id="CHEBI:29105"/>
        <label>2</label>
    </ligand>
</feature>
<feature type="binding site" evidence="1">
    <location>
        <position position="110"/>
    </location>
    <ligand>
        <name>Zn(2+)</name>
        <dbReference type="ChEBI" id="CHEBI:29105"/>
        <label>1</label>
    </ligand>
</feature>
<feature type="binding site" evidence="1">
    <location>
        <position position="127"/>
    </location>
    <ligand>
        <name>Zn(2+)</name>
        <dbReference type="ChEBI" id="CHEBI:29105"/>
        <label>1</label>
    </ligand>
</feature>
<feature type="binding site" evidence="1">
    <location>
        <position position="127"/>
    </location>
    <ligand>
        <name>Zn(2+)</name>
        <dbReference type="ChEBI" id="CHEBI:29105"/>
        <label>2</label>
    </ligand>
</feature>
<feature type="binding site" evidence="1">
    <location>
        <position position="165"/>
    </location>
    <ligand>
        <name>Zn(2+)</name>
        <dbReference type="ChEBI" id="CHEBI:29105"/>
        <label>2</label>
    </ligand>
</feature>
<gene>
    <name evidence="1" type="primary">gloB</name>
    <name type="ordered locus">ECIAI1_0220</name>
</gene>
<proteinExistence type="inferred from homology"/>
<evidence type="ECO:0000255" key="1">
    <source>
        <dbReference type="HAMAP-Rule" id="MF_01374"/>
    </source>
</evidence>
<accession>B7M211</accession>
<organism>
    <name type="scientific">Escherichia coli O8 (strain IAI1)</name>
    <dbReference type="NCBI Taxonomy" id="585034"/>
    <lineage>
        <taxon>Bacteria</taxon>
        <taxon>Pseudomonadati</taxon>
        <taxon>Pseudomonadota</taxon>
        <taxon>Gammaproteobacteria</taxon>
        <taxon>Enterobacterales</taxon>
        <taxon>Enterobacteriaceae</taxon>
        <taxon>Escherichia</taxon>
    </lineage>
</organism>
<sequence>MNLNSIPAFDDNYIWVLNDEAGRCLIVDPGDAEPVLNAITANNWQPEAIFLTHHHHDHVGGVKELVEKFPQIVVYGPQETQDKGTTQVVKDGETAFVLGHEFSVIATPGHTLGHICYFSKPYLFCGDTLFSGGCGRLFEGTASQMYQSLNKLSALPDDTLVCCAHEYTLSNMKFALSILPHDLSINDYYRKVKELRAKNQITLPVILKNERQINVFLRTEDIDLINVINEETLLQQPEERFAWLRSKKDRF</sequence>
<reference key="1">
    <citation type="journal article" date="2009" name="PLoS Genet.">
        <title>Organised genome dynamics in the Escherichia coli species results in highly diverse adaptive paths.</title>
        <authorList>
            <person name="Touchon M."/>
            <person name="Hoede C."/>
            <person name="Tenaillon O."/>
            <person name="Barbe V."/>
            <person name="Baeriswyl S."/>
            <person name="Bidet P."/>
            <person name="Bingen E."/>
            <person name="Bonacorsi S."/>
            <person name="Bouchier C."/>
            <person name="Bouvet O."/>
            <person name="Calteau A."/>
            <person name="Chiapello H."/>
            <person name="Clermont O."/>
            <person name="Cruveiller S."/>
            <person name="Danchin A."/>
            <person name="Diard M."/>
            <person name="Dossat C."/>
            <person name="Karoui M.E."/>
            <person name="Frapy E."/>
            <person name="Garry L."/>
            <person name="Ghigo J.M."/>
            <person name="Gilles A.M."/>
            <person name="Johnson J."/>
            <person name="Le Bouguenec C."/>
            <person name="Lescat M."/>
            <person name="Mangenot S."/>
            <person name="Martinez-Jehanne V."/>
            <person name="Matic I."/>
            <person name="Nassif X."/>
            <person name="Oztas S."/>
            <person name="Petit M.A."/>
            <person name="Pichon C."/>
            <person name="Rouy Z."/>
            <person name="Ruf C.S."/>
            <person name="Schneider D."/>
            <person name="Tourret J."/>
            <person name="Vacherie B."/>
            <person name="Vallenet D."/>
            <person name="Medigue C."/>
            <person name="Rocha E.P.C."/>
            <person name="Denamur E."/>
        </authorList>
    </citation>
    <scope>NUCLEOTIDE SEQUENCE [LARGE SCALE GENOMIC DNA]</scope>
    <source>
        <strain>IAI1</strain>
    </source>
</reference>
<name>GLO2_ECO8A</name>